<organism>
    <name type="scientific">Halobacterium sp. (strain aus-2)</name>
    <dbReference type="NCBI Taxonomy" id="29285"/>
    <lineage>
        <taxon>Archaea</taxon>
        <taxon>Methanobacteriati</taxon>
        <taxon>Methanobacteriota</taxon>
        <taxon>Stenosarchaea group</taxon>
        <taxon>Halobacteria</taxon>
        <taxon>Halobacteriales</taxon>
        <taxon>Halobacteriaceae</taxon>
        <taxon>Halobacterium</taxon>
    </lineage>
</organism>
<name>BACR2_HALS2</name>
<accession>P29563</accession>
<dbReference type="EMBL" id="S56354">
    <property type="protein sequence ID" value="AAB19870.2"/>
    <property type="molecule type" value="Genomic_DNA"/>
</dbReference>
<dbReference type="PIR" id="S14731">
    <property type="entry name" value="S14731"/>
</dbReference>
<dbReference type="PDB" id="1VGO">
    <property type="method" value="X-ray"/>
    <property type="resolution" value="2.50 A"/>
    <property type="chains" value="A/B=7-259"/>
</dbReference>
<dbReference type="PDB" id="2EI4">
    <property type="method" value="X-ray"/>
    <property type="resolution" value="2.10 A"/>
    <property type="chains" value="A=7-259"/>
</dbReference>
<dbReference type="PDB" id="2Z55">
    <property type="method" value="X-ray"/>
    <property type="resolution" value="2.50 A"/>
    <property type="chains" value="A/B/D/E=7-259"/>
</dbReference>
<dbReference type="PDB" id="3WQJ">
    <property type="method" value="X-ray"/>
    <property type="resolution" value="1.80 A"/>
    <property type="chains" value="A=1-259"/>
</dbReference>
<dbReference type="PDBsum" id="1VGO"/>
<dbReference type="PDBsum" id="2EI4"/>
<dbReference type="PDBsum" id="2Z55"/>
<dbReference type="PDBsum" id="3WQJ"/>
<dbReference type="SMR" id="P29563"/>
<dbReference type="TCDB" id="3.E.1.1.2">
    <property type="family name" value="the ion-translocating microbial rhodopsin (mr) family"/>
</dbReference>
<dbReference type="EvolutionaryTrace" id="P29563"/>
<dbReference type="GO" id="GO:0005886">
    <property type="term" value="C:plasma membrane"/>
    <property type="evidence" value="ECO:0007669"/>
    <property type="project" value="UniProtKB-SubCell"/>
</dbReference>
<dbReference type="GO" id="GO:0005216">
    <property type="term" value="F:monoatomic ion channel activity"/>
    <property type="evidence" value="ECO:0007669"/>
    <property type="project" value="InterPro"/>
</dbReference>
<dbReference type="GO" id="GO:0009881">
    <property type="term" value="F:photoreceptor activity"/>
    <property type="evidence" value="ECO:0007669"/>
    <property type="project" value="UniProtKB-KW"/>
</dbReference>
<dbReference type="GO" id="GO:0007602">
    <property type="term" value="P:phototransduction"/>
    <property type="evidence" value="ECO:0007669"/>
    <property type="project" value="UniProtKB-KW"/>
</dbReference>
<dbReference type="GO" id="GO:1902600">
    <property type="term" value="P:proton transmembrane transport"/>
    <property type="evidence" value="ECO:0007669"/>
    <property type="project" value="UniProtKB-KW"/>
</dbReference>
<dbReference type="CDD" id="cd15244">
    <property type="entry name" value="7tm_bacteriorhodopsin"/>
    <property type="match status" value="1"/>
</dbReference>
<dbReference type="Gene3D" id="1.20.1070.10">
    <property type="entry name" value="Rhodopsin 7-helix transmembrane proteins"/>
    <property type="match status" value="1"/>
</dbReference>
<dbReference type="InterPro" id="IPR001425">
    <property type="entry name" value="Arc/bac/fun_rhodopsins"/>
</dbReference>
<dbReference type="InterPro" id="IPR018229">
    <property type="entry name" value="Rhodopsin_retinal_BS"/>
</dbReference>
<dbReference type="PANTHER" id="PTHR28286">
    <property type="match status" value="1"/>
</dbReference>
<dbReference type="PANTHER" id="PTHR28286:SF2">
    <property type="entry name" value="BACTERIORHODOPSIN _OPSIN, NOPA (EUROFUNG)"/>
    <property type="match status" value="1"/>
</dbReference>
<dbReference type="Pfam" id="PF01036">
    <property type="entry name" value="Bac_rhodopsin"/>
    <property type="match status" value="1"/>
</dbReference>
<dbReference type="PRINTS" id="PR00251">
    <property type="entry name" value="BACTRLOPSIN"/>
</dbReference>
<dbReference type="SMART" id="SM01021">
    <property type="entry name" value="Bac_rhodopsin"/>
    <property type="match status" value="1"/>
</dbReference>
<dbReference type="SUPFAM" id="SSF81321">
    <property type="entry name" value="Family A G protein-coupled receptor-like"/>
    <property type="match status" value="1"/>
</dbReference>
<dbReference type="PROSITE" id="PS00950">
    <property type="entry name" value="BACTERIAL_OPSIN_1"/>
    <property type="match status" value="1"/>
</dbReference>
<dbReference type="PROSITE" id="PS00327">
    <property type="entry name" value="BACTERIAL_OPSIN_RET"/>
    <property type="match status" value="1"/>
</dbReference>
<sequence length="259" mass="27938">MDPIALQAGFDLLNDGRPETLWLGIGTLLMLIGTFYFIARGWGVTDKEAREYYAITILVPGIASAAYLAMFFGIGVTEVELASGTVLDIYYARYADWLFTTPLLLLDLALLAKVDRVTIGTLIGVDALMIVTGLIGALSKTPLARYTWWLFSTIAFLFVLYYLLTSLRSAAAKRSEEVRSTFNTLTALVAVLWTAYPILWIVGTEGAGVVGLGIETLAFMVLDVTAKVGFGFVLLRSRAILGETEAPEPSAGADASAAD</sequence>
<feature type="propeptide" id="PRO_0000020252">
    <location>
        <begin position="1"/>
        <end position="6"/>
    </location>
</feature>
<feature type="chain" id="PRO_0000020253" description="Archaerhodopsin-2">
    <location>
        <begin position="7"/>
        <end position="259"/>
    </location>
</feature>
<feature type="topological domain" description="Extracellular" evidence="1">
    <location>
        <begin position="7"/>
        <end position="18"/>
    </location>
</feature>
<feature type="transmembrane region" description="Helical; Name=Helix A" evidence="1">
    <location>
        <begin position="19"/>
        <end position="40"/>
    </location>
</feature>
<feature type="topological domain" description="Cytoplasmic" evidence="1">
    <location>
        <begin position="41"/>
        <end position="49"/>
    </location>
</feature>
<feature type="transmembrane region" description="Helical; Name=Helix B" evidence="1">
    <location>
        <begin position="50"/>
        <end position="71"/>
    </location>
</feature>
<feature type="topological domain" description="Extracellular" evidence="1">
    <location>
        <begin position="72"/>
        <end position="90"/>
    </location>
</feature>
<feature type="transmembrane region" description="Helical; Name=Helix C" evidence="1">
    <location>
        <begin position="91"/>
        <end position="112"/>
    </location>
</feature>
<feature type="topological domain" description="Cytoplasmic" evidence="1">
    <location>
        <begin position="113"/>
        <end position="115"/>
    </location>
</feature>
<feature type="transmembrane region" description="Helical; Name=Helix D" evidence="1">
    <location>
        <begin position="116"/>
        <end position="138"/>
    </location>
</feature>
<feature type="topological domain" description="Extracellular" evidence="1">
    <location>
        <begin position="139"/>
        <end position="142"/>
    </location>
</feature>
<feature type="transmembrane region" description="Helical; Name=Helix E" evidence="1">
    <location>
        <begin position="143"/>
        <end position="171"/>
    </location>
</feature>
<feature type="topological domain" description="Cytoplasmic" evidence="1">
    <location>
        <begin position="172"/>
        <end position="174"/>
    </location>
</feature>
<feature type="transmembrane region" description="Helical; Name=Helix F" evidence="1">
    <location>
        <begin position="175"/>
        <end position="203"/>
    </location>
</feature>
<feature type="topological domain" description="Extracellular" evidence="1">
    <location>
        <begin position="204"/>
        <end position="211"/>
    </location>
</feature>
<feature type="transmembrane region" description="Helical; Name=Helix G" evidence="1">
    <location>
        <begin position="212"/>
        <end position="244"/>
    </location>
</feature>
<feature type="topological domain" description="Cytoplasmic" evidence="1">
    <location>
        <begin position="245"/>
        <end position="259"/>
    </location>
</feature>
<feature type="modified residue" description="Pyrrolidone carboxylic acid" evidence="1">
    <location>
        <position position="7"/>
    </location>
</feature>
<feature type="modified residue" description="N6-(retinylidene)lysine" evidence="1">
    <location>
        <position position="227"/>
    </location>
</feature>
<feature type="strand" evidence="4">
    <location>
        <begin position="14"/>
        <end position="16"/>
    </location>
</feature>
<feature type="helix" evidence="4">
    <location>
        <begin position="20"/>
        <end position="41"/>
    </location>
</feature>
<feature type="helix" evidence="4">
    <location>
        <begin position="47"/>
        <end position="72"/>
    </location>
</feature>
<feature type="strand" evidence="4">
    <location>
        <begin position="77"/>
        <end position="80"/>
    </location>
</feature>
<feature type="strand" evidence="4">
    <location>
        <begin position="86"/>
        <end position="89"/>
    </location>
</feature>
<feature type="helix" evidence="4">
    <location>
        <begin position="92"/>
        <end position="112"/>
    </location>
</feature>
<feature type="helix" evidence="4">
    <location>
        <begin position="116"/>
        <end position="138"/>
    </location>
</feature>
<feature type="helix" evidence="4">
    <location>
        <begin position="142"/>
        <end position="164"/>
    </location>
</feature>
<feature type="helix" evidence="4">
    <location>
        <begin position="166"/>
        <end position="171"/>
    </location>
</feature>
<feature type="helix" evidence="4">
    <location>
        <begin position="176"/>
        <end position="202"/>
    </location>
</feature>
<feature type="turn" evidence="4">
    <location>
        <begin position="204"/>
        <end position="207"/>
    </location>
</feature>
<feature type="helix" evidence="4">
    <location>
        <begin position="212"/>
        <end position="235"/>
    </location>
</feature>
<feature type="helix" evidence="3">
    <location>
        <begin position="238"/>
        <end position="240"/>
    </location>
</feature>
<evidence type="ECO:0000250" key="1"/>
<evidence type="ECO:0000305" key="2"/>
<evidence type="ECO:0007829" key="3">
    <source>
        <dbReference type="PDB" id="2EI4"/>
    </source>
</evidence>
<evidence type="ECO:0007829" key="4">
    <source>
        <dbReference type="PDB" id="3WQJ"/>
    </source>
</evidence>
<comment type="function">
    <text>Light-driven proton pump. It may interact with bacterioruberin in the claret membrane.</text>
</comment>
<comment type="subcellular location">
    <subcellularLocation>
        <location>Cell membrane</location>
        <topology>Multi-pass membrane protein</topology>
    </subcellularLocation>
</comment>
<comment type="similarity">
    <text evidence="2">Belongs to the archaeal/bacterial/fungal opsin family.</text>
</comment>
<protein>
    <recommendedName>
        <fullName>Archaerhodopsin-2</fullName>
        <shortName>AR 2</shortName>
    </recommendedName>
</protein>
<reference key="1">
    <citation type="journal article" date="1991" name="Arch. Biochem. Biophys.">
        <title>Archaerhodopsin-2, from Halobacterium sp. aus-2 further reveals essential amino acid residues for light-driven proton pumps.</title>
        <authorList>
            <person name="Uegaki K."/>
            <person name="Sugiyama Y."/>
            <person name="Mukohata Y."/>
        </authorList>
    </citation>
    <scope>NUCLEOTIDE SEQUENCE [GENOMIC DNA]</scope>
    <scope>PARTIAL PROTEIN SEQUENCE</scope>
</reference>
<keyword id="KW-0002">3D-structure</keyword>
<keyword id="KW-1003">Cell membrane</keyword>
<keyword id="KW-0157">Chromophore</keyword>
<keyword id="KW-0903">Direct protein sequencing</keyword>
<keyword id="KW-0375">Hydrogen ion transport</keyword>
<keyword id="KW-0406">Ion transport</keyword>
<keyword id="KW-0472">Membrane</keyword>
<keyword id="KW-0600">Photoreceptor protein</keyword>
<keyword id="KW-0873">Pyrrolidone carboxylic acid</keyword>
<keyword id="KW-0675">Receptor</keyword>
<keyword id="KW-0681">Retinal protein</keyword>
<keyword id="KW-0716">Sensory transduction</keyword>
<keyword id="KW-0812">Transmembrane</keyword>
<keyword id="KW-1133">Transmembrane helix</keyword>
<keyword id="KW-0813">Transport</keyword>
<proteinExistence type="evidence at protein level"/>